<organism>
    <name type="scientific">Homo sapiens</name>
    <name type="common">Human</name>
    <dbReference type="NCBI Taxonomy" id="9606"/>
    <lineage>
        <taxon>Eukaryota</taxon>
        <taxon>Metazoa</taxon>
        <taxon>Chordata</taxon>
        <taxon>Craniata</taxon>
        <taxon>Vertebrata</taxon>
        <taxon>Euteleostomi</taxon>
        <taxon>Mammalia</taxon>
        <taxon>Eutheria</taxon>
        <taxon>Euarchontoglires</taxon>
        <taxon>Primates</taxon>
        <taxon>Haplorrhini</taxon>
        <taxon>Catarrhini</taxon>
        <taxon>Hominidae</taxon>
        <taxon>Homo</taxon>
    </lineage>
</organism>
<feature type="chain" id="PRO_0000308948" description="Cancer/testis antigen family 45 member A3">
    <location>
        <begin position="1"/>
        <end position="189"/>
    </location>
</feature>
<feature type="region of interest" description="Disordered" evidence="1">
    <location>
        <begin position="81"/>
        <end position="119"/>
    </location>
</feature>
<feature type="sequence variant" id="VAR_075898" description="In dbSNP:rs200277856." evidence="2 3 4">
    <original>E</original>
    <variation>A</variation>
    <location>
        <position position="55"/>
    </location>
</feature>
<feature type="sequence conflict" description="In Ref. 1; AAW66467, 2; BAC05380 and 3; CAI41549." evidence="7" ref="1 2 3">
    <original>R</original>
    <variation>Q</variation>
    <location>
        <position position="120"/>
    </location>
</feature>
<keyword id="KW-0539">Nucleus</keyword>
<keyword id="KW-1185">Reference proteome</keyword>
<proteinExistence type="evidence at protein level"/>
<evidence type="ECO:0000256" key="1">
    <source>
        <dbReference type="SAM" id="MobiDB-lite"/>
    </source>
</evidence>
<evidence type="ECO:0000269" key="2">
    <source>
    </source>
</evidence>
<evidence type="ECO:0000269" key="3">
    <source>
    </source>
</evidence>
<evidence type="ECO:0000269" key="4">
    <source>
    </source>
</evidence>
<evidence type="ECO:0000269" key="5">
    <source>
    </source>
</evidence>
<evidence type="ECO:0000303" key="6">
    <source>
    </source>
</evidence>
<evidence type="ECO:0000305" key="7"/>
<evidence type="ECO:0000312" key="8">
    <source>
        <dbReference type="HGNC" id="HGNC:33268"/>
    </source>
</evidence>
<name>CT453_HUMAN</name>
<dbReference type="EMBL" id="AY743711">
    <property type="protein sequence ID" value="AAW66466.1"/>
    <property type="molecule type" value="mRNA"/>
</dbReference>
<dbReference type="EMBL" id="AY743712">
    <property type="protein sequence ID" value="AAW66467.1"/>
    <property type="molecule type" value="mRNA"/>
</dbReference>
<dbReference type="EMBL" id="AK098689">
    <property type="protein sequence ID" value="BAC05380.1"/>
    <property type="molecule type" value="mRNA"/>
</dbReference>
<dbReference type="EMBL" id="AC240441">
    <property type="status" value="NOT_ANNOTATED_CDS"/>
    <property type="molecule type" value="Genomic_DNA"/>
</dbReference>
<dbReference type="EMBL" id="AL590618">
    <property type="protein sequence ID" value="CAI41546.1"/>
    <property type="molecule type" value="Genomic_DNA"/>
</dbReference>
<dbReference type="EMBL" id="AL590618">
    <property type="protein sequence ID" value="CAI41549.1"/>
    <property type="molecule type" value="Genomic_DNA"/>
</dbReference>
<dbReference type="EMBL" id="CH471107">
    <property type="protein sequence ID" value="EAX11718.1"/>
    <property type="molecule type" value="Genomic_DNA"/>
</dbReference>
<dbReference type="EMBL" id="CH471107">
    <property type="protein sequence ID" value="EAX11719.1"/>
    <property type="molecule type" value="Genomic_DNA"/>
</dbReference>
<dbReference type="EMBL" id="BC028711">
    <property type="protein sequence ID" value="AAH28711.1"/>
    <property type="molecule type" value="mRNA"/>
</dbReference>
<dbReference type="EMBL" id="BC140735">
    <property type="protein sequence ID" value="AAI40736.1"/>
    <property type="molecule type" value="mRNA"/>
</dbReference>
<dbReference type="EMBL" id="BC144437">
    <property type="protein sequence ID" value="AAI44438.1"/>
    <property type="molecule type" value="mRNA"/>
</dbReference>
<dbReference type="EMBL" id="BC140926">
    <property type="protein sequence ID" value="AAI40927.1"/>
    <property type="molecule type" value="mRNA"/>
</dbReference>
<dbReference type="CCDS" id="CCDS76030.1"/>
<dbReference type="RefSeq" id="NP_001017435.1">
    <property type="nucleotide sequence ID" value="NM_001017435.2"/>
</dbReference>
<dbReference type="RefSeq" id="NP_001357077.1">
    <property type="nucleotide sequence ID" value="NM_001370148.2"/>
</dbReference>
<dbReference type="RefSeq" id="NP_001357078.1">
    <property type="nucleotide sequence ID" value="NM_001370149.1"/>
</dbReference>
<dbReference type="RefSeq" id="XP_006724821.1">
    <property type="nucleotide sequence ID" value="XM_006724758.3"/>
</dbReference>
<dbReference type="RefSeq" id="XP_011529642.1">
    <property type="nucleotide sequence ID" value="XM_011531340.2"/>
</dbReference>
<dbReference type="SMR" id="Q8NHU0"/>
<dbReference type="BioGRID" id="137546">
    <property type="interactions" value="8"/>
</dbReference>
<dbReference type="FunCoup" id="Q8NHU0">
    <property type="interactions" value="33"/>
</dbReference>
<dbReference type="IntAct" id="Q8NHU0">
    <property type="interactions" value="9"/>
</dbReference>
<dbReference type="MINT" id="Q8NHU0"/>
<dbReference type="STRING" id="9606.ENSP00000471418"/>
<dbReference type="GlyGen" id="Q8NHU0">
    <property type="glycosylation" value="1 site"/>
</dbReference>
<dbReference type="iPTMnet" id="Q8NHU0"/>
<dbReference type="PhosphoSitePlus" id="Q8NHU0"/>
<dbReference type="BioMuta" id="CT45A3"/>
<dbReference type="DMDM" id="74751317"/>
<dbReference type="jPOST" id="Q8NHU0"/>
<dbReference type="MassIVE" id="Q8NHU0"/>
<dbReference type="PaxDb" id="9606-ENSP00000471418"/>
<dbReference type="PeptideAtlas" id="Q8NHU0"/>
<dbReference type="Pumba" id="Q8NHU0"/>
<dbReference type="Antibodypedia" id="72422">
    <property type="antibodies" value="52 antibodies from 16 providers"/>
</dbReference>
<dbReference type="DNASU" id="441519"/>
<dbReference type="Ensembl" id="ENST00000597510.6">
    <property type="protein sequence ID" value="ENSP00000471418.1"/>
    <property type="gene ID" value="ENSG00000269096.7"/>
</dbReference>
<dbReference type="Ensembl" id="ENST00000598716.3">
    <property type="protein sequence ID" value="ENSP00000471571.2"/>
    <property type="gene ID" value="ENSG00000269096.7"/>
</dbReference>
<dbReference type="GeneID" id="441519"/>
<dbReference type="KEGG" id="hsa:441519"/>
<dbReference type="MANE-Select" id="ENST00000598716.3">
    <property type="protein sequence ID" value="ENSP00000471571.2"/>
    <property type="RefSeq nucleotide sequence ID" value="NM_001370148.2"/>
    <property type="RefSeq protein sequence ID" value="NP_001357077.1"/>
</dbReference>
<dbReference type="UCSC" id="uc065bga.1">
    <property type="organism name" value="human"/>
</dbReference>
<dbReference type="AGR" id="HGNC:33268"/>
<dbReference type="CTD" id="441519"/>
<dbReference type="GeneCards" id="CT45A3"/>
<dbReference type="HGNC" id="HGNC:33268">
    <property type="gene designation" value="CT45A3"/>
</dbReference>
<dbReference type="HPA" id="ENSG00000269096">
    <property type="expression patterns" value="Group enriched (brain, testis)"/>
</dbReference>
<dbReference type="MIM" id="300794">
    <property type="type" value="gene"/>
</dbReference>
<dbReference type="MIM" id="300795">
    <property type="type" value="gene"/>
</dbReference>
<dbReference type="neXtProt" id="NX_Q8NHU0"/>
<dbReference type="PharmGKB" id="PA164718201"/>
<dbReference type="VEuPathDB" id="HostDB:ENSG00000269096"/>
<dbReference type="eggNOG" id="KOG3768">
    <property type="taxonomic scope" value="Eukaryota"/>
</dbReference>
<dbReference type="GeneTree" id="ENSGT00390000016655"/>
<dbReference type="HOGENOM" id="CLU_123664_0_0_1"/>
<dbReference type="InParanoid" id="Q8NHU0"/>
<dbReference type="OrthoDB" id="9520782at2759"/>
<dbReference type="PAN-GO" id="Q8NHU0">
    <property type="GO annotations" value="2 GO annotations based on evolutionary models"/>
</dbReference>
<dbReference type="PhylomeDB" id="Q8NHU0"/>
<dbReference type="PathwayCommons" id="Q8NHU0"/>
<dbReference type="SignaLink" id="Q8NHU0"/>
<dbReference type="BioGRID-ORCS" id="441519">
    <property type="hits" value="11 hits in 231 CRISPR screens"/>
</dbReference>
<dbReference type="GenomeRNAi" id="441519"/>
<dbReference type="Pharos" id="Q8NHU0">
    <property type="development level" value="Tdark"/>
</dbReference>
<dbReference type="PRO" id="PR:Q8NHU0"/>
<dbReference type="Proteomes" id="UP000005640">
    <property type="component" value="Chromosome X"/>
</dbReference>
<dbReference type="RNAct" id="Q8NHU0">
    <property type="molecule type" value="protein"/>
</dbReference>
<dbReference type="Bgee" id="ENSG00000269096">
    <property type="expression patterns" value="Expressed in male germ line stem cell (sensu Vertebrata) in testis and 30 other cell types or tissues"/>
</dbReference>
<dbReference type="GO" id="GO:0005634">
    <property type="term" value="C:nucleus"/>
    <property type="evidence" value="ECO:0000314"/>
    <property type="project" value="UniProtKB"/>
</dbReference>
<dbReference type="InterPro" id="IPR029307">
    <property type="entry name" value="INT_SG_DDX_CT_C"/>
</dbReference>
<dbReference type="InterPro" id="IPR051113">
    <property type="entry name" value="Integrator_subunit6"/>
</dbReference>
<dbReference type="PANTHER" id="PTHR12957">
    <property type="entry name" value="DEAD/H BOX POLYPEPTIDE 26/DICE1-RELATED"/>
    <property type="match status" value="1"/>
</dbReference>
<dbReference type="PANTHER" id="PTHR12957:SF2">
    <property type="entry name" value="INTEGRATOR COMPLEX SUBUNIT 6"/>
    <property type="match status" value="1"/>
</dbReference>
<dbReference type="Pfam" id="PF15300">
    <property type="entry name" value="INT_SG_DDX_CT_C"/>
    <property type="match status" value="1"/>
</dbReference>
<reference key="1">
    <citation type="journal article" date="2005" name="Proc. Natl. Acad. Sci. U.S.A.">
        <title>Identification of cancer/testis-antigen genes by massively parallel signature sequencing.</title>
        <authorList>
            <person name="Chen Y.-T."/>
            <person name="Scanlan M.J."/>
            <person name="Venditti C.A."/>
            <person name="Chua R."/>
            <person name="Theiler G."/>
            <person name="Stevenson B.J."/>
            <person name="Iseli C."/>
            <person name="Gure A.O."/>
            <person name="Vasicek T."/>
            <person name="Strausberg R.L."/>
            <person name="Jongeneel C.V."/>
            <person name="Old L.J."/>
            <person name="Simpson A.J.G."/>
        </authorList>
    </citation>
    <scope>NUCLEOTIDE SEQUENCE [MRNA]</scope>
    <scope>TISSUE SPECIFICITY</scope>
    <scope>IDENTIFICATION AS A CANCER/TESTIS ANTIGEN</scope>
    <scope>VARIANT ALA-55</scope>
</reference>
<reference key="2">
    <citation type="journal article" date="2004" name="Nat. Genet.">
        <title>Complete sequencing and characterization of 21,243 full-length human cDNAs.</title>
        <authorList>
            <person name="Ota T."/>
            <person name="Suzuki Y."/>
            <person name="Nishikawa T."/>
            <person name="Otsuki T."/>
            <person name="Sugiyama T."/>
            <person name="Irie R."/>
            <person name="Wakamatsu A."/>
            <person name="Hayashi K."/>
            <person name="Sato H."/>
            <person name="Nagai K."/>
            <person name="Kimura K."/>
            <person name="Makita H."/>
            <person name="Sekine M."/>
            <person name="Obayashi M."/>
            <person name="Nishi T."/>
            <person name="Shibahara T."/>
            <person name="Tanaka T."/>
            <person name="Ishii S."/>
            <person name="Yamamoto J."/>
            <person name="Saito K."/>
            <person name="Kawai Y."/>
            <person name="Isono Y."/>
            <person name="Nakamura Y."/>
            <person name="Nagahari K."/>
            <person name="Murakami K."/>
            <person name="Yasuda T."/>
            <person name="Iwayanagi T."/>
            <person name="Wagatsuma M."/>
            <person name="Shiratori A."/>
            <person name="Sudo H."/>
            <person name="Hosoiri T."/>
            <person name="Kaku Y."/>
            <person name="Kodaira H."/>
            <person name="Kondo H."/>
            <person name="Sugawara M."/>
            <person name="Takahashi M."/>
            <person name="Kanda K."/>
            <person name="Yokoi T."/>
            <person name="Furuya T."/>
            <person name="Kikkawa E."/>
            <person name="Omura Y."/>
            <person name="Abe K."/>
            <person name="Kamihara K."/>
            <person name="Katsuta N."/>
            <person name="Sato K."/>
            <person name="Tanikawa M."/>
            <person name="Yamazaki M."/>
            <person name="Ninomiya K."/>
            <person name="Ishibashi T."/>
            <person name="Yamashita H."/>
            <person name="Murakawa K."/>
            <person name="Fujimori K."/>
            <person name="Tanai H."/>
            <person name="Kimata M."/>
            <person name="Watanabe M."/>
            <person name="Hiraoka S."/>
            <person name="Chiba Y."/>
            <person name="Ishida S."/>
            <person name="Ono Y."/>
            <person name="Takiguchi S."/>
            <person name="Watanabe S."/>
            <person name="Yosida M."/>
            <person name="Hotuta T."/>
            <person name="Kusano J."/>
            <person name="Kanehori K."/>
            <person name="Takahashi-Fujii A."/>
            <person name="Hara H."/>
            <person name="Tanase T.-O."/>
            <person name="Nomura Y."/>
            <person name="Togiya S."/>
            <person name="Komai F."/>
            <person name="Hara R."/>
            <person name="Takeuchi K."/>
            <person name="Arita M."/>
            <person name="Imose N."/>
            <person name="Musashino K."/>
            <person name="Yuuki H."/>
            <person name="Oshima A."/>
            <person name="Sasaki N."/>
            <person name="Aotsuka S."/>
            <person name="Yoshikawa Y."/>
            <person name="Matsunawa H."/>
            <person name="Ichihara T."/>
            <person name="Shiohata N."/>
            <person name="Sano S."/>
            <person name="Moriya S."/>
            <person name="Momiyama H."/>
            <person name="Satoh N."/>
            <person name="Takami S."/>
            <person name="Terashima Y."/>
            <person name="Suzuki O."/>
            <person name="Nakagawa S."/>
            <person name="Senoh A."/>
            <person name="Mizoguchi H."/>
            <person name="Goto Y."/>
            <person name="Shimizu F."/>
            <person name="Wakebe H."/>
            <person name="Hishigaki H."/>
            <person name="Watanabe T."/>
            <person name="Sugiyama A."/>
            <person name="Takemoto M."/>
            <person name="Kawakami B."/>
            <person name="Yamazaki M."/>
            <person name="Watanabe K."/>
            <person name="Kumagai A."/>
            <person name="Itakura S."/>
            <person name="Fukuzumi Y."/>
            <person name="Fujimori Y."/>
            <person name="Komiyama M."/>
            <person name="Tashiro H."/>
            <person name="Tanigami A."/>
            <person name="Fujiwara T."/>
            <person name="Ono T."/>
            <person name="Yamada K."/>
            <person name="Fujii Y."/>
            <person name="Ozaki K."/>
            <person name="Hirao M."/>
            <person name="Ohmori Y."/>
            <person name="Kawabata A."/>
            <person name="Hikiji T."/>
            <person name="Kobatake N."/>
            <person name="Inagaki H."/>
            <person name="Ikema Y."/>
            <person name="Okamoto S."/>
            <person name="Okitani R."/>
            <person name="Kawakami T."/>
            <person name="Noguchi S."/>
            <person name="Itoh T."/>
            <person name="Shigeta K."/>
            <person name="Senba T."/>
            <person name="Matsumura K."/>
            <person name="Nakajima Y."/>
            <person name="Mizuno T."/>
            <person name="Morinaga M."/>
            <person name="Sasaki M."/>
            <person name="Togashi T."/>
            <person name="Oyama M."/>
            <person name="Hata H."/>
            <person name="Watanabe M."/>
            <person name="Komatsu T."/>
            <person name="Mizushima-Sugano J."/>
            <person name="Satoh T."/>
            <person name="Shirai Y."/>
            <person name="Takahashi Y."/>
            <person name="Nakagawa K."/>
            <person name="Okumura K."/>
            <person name="Nagase T."/>
            <person name="Nomura N."/>
            <person name="Kikuchi H."/>
            <person name="Masuho Y."/>
            <person name="Yamashita R."/>
            <person name="Nakai K."/>
            <person name="Yada T."/>
            <person name="Nakamura Y."/>
            <person name="Ohara O."/>
            <person name="Isogai T."/>
            <person name="Sugano S."/>
        </authorList>
    </citation>
    <scope>NUCLEOTIDE SEQUENCE [LARGE SCALE MRNA]</scope>
    <scope>VARIANT ALA-55</scope>
    <source>
        <tissue>Testis</tissue>
    </source>
</reference>
<reference key="3">
    <citation type="journal article" date="2005" name="Nature">
        <title>The DNA sequence of the human X chromosome.</title>
        <authorList>
            <person name="Ross M.T."/>
            <person name="Grafham D.V."/>
            <person name="Coffey A.J."/>
            <person name="Scherer S."/>
            <person name="McLay K."/>
            <person name="Muzny D."/>
            <person name="Platzer M."/>
            <person name="Howell G.R."/>
            <person name="Burrows C."/>
            <person name="Bird C.P."/>
            <person name="Frankish A."/>
            <person name="Lovell F.L."/>
            <person name="Howe K.L."/>
            <person name="Ashurst J.L."/>
            <person name="Fulton R.S."/>
            <person name="Sudbrak R."/>
            <person name="Wen G."/>
            <person name="Jones M.C."/>
            <person name="Hurles M.E."/>
            <person name="Andrews T.D."/>
            <person name="Scott C.E."/>
            <person name="Searle S."/>
            <person name="Ramser J."/>
            <person name="Whittaker A."/>
            <person name="Deadman R."/>
            <person name="Carter N.P."/>
            <person name="Hunt S.E."/>
            <person name="Chen R."/>
            <person name="Cree A."/>
            <person name="Gunaratne P."/>
            <person name="Havlak P."/>
            <person name="Hodgson A."/>
            <person name="Metzker M.L."/>
            <person name="Richards S."/>
            <person name="Scott G."/>
            <person name="Steffen D."/>
            <person name="Sodergren E."/>
            <person name="Wheeler D.A."/>
            <person name="Worley K.C."/>
            <person name="Ainscough R."/>
            <person name="Ambrose K.D."/>
            <person name="Ansari-Lari M.A."/>
            <person name="Aradhya S."/>
            <person name="Ashwell R.I."/>
            <person name="Babbage A.K."/>
            <person name="Bagguley C.L."/>
            <person name="Ballabio A."/>
            <person name="Banerjee R."/>
            <person name="Barker G.E."/>
            <person name="Barlow K.F."/>
            <person name="Barrett I.P."/>
            <person name="Bates K.N."/>
            <person name="Beare D.M."/>
            <person name="Beasley H."/>
            <person name="Beasley O."/>
            <person name="Beck A."/>
            <person name="Bethel G."/>
            <person name="Blechschmidt K."/>
            <person name="Brady N."/>
            <person name="Bray-Allen S."/>
            <person name="Bridgeman A.M."/>
            <person name="Brown A.J."/>
            <person name="Brown M.J."/>
            <person name="Bonnin D."/>
            <person name="Bruford E.A."/>
            <person name="Buhay C."/>
            <person name="Burch P."/>
            <person name="Burford D."/>
            <person name="Burgess J."/>
            <person name="Burrill W."/>
            <person name="Burton J."/>
            <person name="Bye J.M."/>
            <person name="Carder C."/>
            <person name="Carrel L."/>
            <person name="Chako J."/>
            <person name="Chapman J.C."/>
            <person name="Chavez D."/>
            <person name="Chen E."/>
            <person name="Chen G."/>
            <person name="Chen Y."/>
            <person name="Chen Z."/>
            <person name="Chinault C."/>
            <person name="Ciccodicola A."/>
            <person name="Clark S.Y."/>
            <person name="Clarke G."/>
            <person name="Clee C.M."/>
            <person name="Clegg S."/>
            <person name="Clerc-Blankenburg K."/>
            <person name="Clifford K."/>
            <person name="Cobley V."/>
            <person name="Cole C.G."/>
            <person name="Conquer J.S."/>
            <person name="Corby N."/>
            <person name="Connor R.E."/>
            <person name="David R."/>
            <person name="Davies J."/>
            <person name="Davis C."/>
            <person name="Davis J."/>
            <person name="Delgado O."/>
            <person name="Deshazo D."/>
            <person name="Dhami P."/>
            <person name="Ding Y."/>
            <person name="Dinh H."/>
            <person name="Dodsworth S."/>
            <person name="Draper H."/>
            <person name="Dugan-Rocha S."/>
            <person name="Dunham A."/>
            <person name="Dunn M."/>
            <person name="Durbin K.J."/>
            <person name="Dutta I."/>
            <person name="Eades T."/>
            <person name="Ellwood M."/>
            <person name="Emery-Cohen A."/>
            <person name="Errington H."/>
            <person name="Evans K.L."/>
            <person name="Faulkner L."/>
            <person name="Francis F."/>
            <person name="Frankland J."/>
            <person name="Fraser A.E."/>
            <person name="Galgoczy P."/>
            <person name="Gilbert J."/>
            <person name="Gill R."/>
            <person name="Gloeckner G."/>
            <person name="Gregory S.G."/>
            <person name="Gribble S."/>
            <person name="Griffiths C."/>
            <person name="Grocock R."/>
            <person name="Gu Y."/>
            <person name="Gwilliam R."/>
            <person name="Hamilton C."/>
            <person name="Hart E.A."/>
            <person name="Hawes A."/>
            <person name="Heath P.D."/>
            <person name="Heitmann K."/>
            <person name="Hennig S."/>
            <person name="Hernandez J."/>
            <person name="Hinzmann B."/>
            <person name="Ho S."/>
            <person name="Hoffs M."/>
            <person name="Howden P.J."/>
            <person name="Huckle E.J."/>
            <person name="Hume J."/>
            <person name="Hunt P.J."/>
            <person name="Hunt A.R."/>
            <person name="Isherwood J."/>
            <person name="Jacob L."/>
            <person name="Johnson D."/>
            <person name="Jones S."/>
            <person name="de Jong P.J."/>
            <person name="Joseph S.S."/>
            <person name="Keenan S."/>
            <person name="Kelly S."/>
            <person name="Kershaw J.K."/>
            <person name="Khan Z."/>
            <person name="Kioschis P."/>
            <person name="Klages S."/>
            <person name="Knights A.J."/>
            <person name="Kosiura A."/>
            <person name="Kovar-Smith C."/>
            <person name="Laird G.K."/>
            <person name="Langford C."/>
            <person name="Lawlor S."/>
            <person name="Leversha M."/>
            <person name="Lewis L."/>
            <person name="Liu W."/>
            <person name="Lloyd C."/>
            <person name="Lloyd D.M."/>
            <person name="Loulseged H."/>
            <person name="Loveland J.E."/>
            <person name="Lovell J.D."/>
            <person name="Lozado R."/>
            <person name="Lu J."/>
            <person name="Lyne R."/>
            <person name="Ma J."/>
            <person name="Maheshwari M."/>
            <person name="Matthews L.H."/>
            <person name="McDowall J."/>
            <person name="McLaren S."/>
            <person name="McMurray A."/>
            <person name="Meidl P."/>
            <person name="Meitinger T."/>
            <person name="Milne S."/>
            <person name="Miner G."/>
            <person name="Mistry S.L."/>
            <person name="Morgan M."/>
            <person name="Morris S."/>
            <person name="Mueller I."/>
            <person name="Mullikin J.C."/>
            <person name="Nguyen N."/>
            <person name="Nordsiek G."/>
            <person name="Nyakatura G."/>
            <person name="O'dell C.N."/>
            <person name="Okwuonu G."/>
            <person name="Palmer S."/>
            <person name="Pandian R."/>
            <person name="Parker D."/>
            <person name="Parrish J."/>
            <person name="Pasternak S."/>
            <person name="Patel D."/>
            <person name="Pearce A.V."/>
            <person name="Pearson D.M."/>
            <person name="Pelan S.E."/>
            <person name="Perez L."/>
            <person name="Porter K.M."/>
            <person name="Ramsey Y."/>
            <person name="Reichwald K."/>
            <person name="Rhodes S."/>
            <person name="Ridler K.A."/>
            <person name="Schlessinger D."/>
            <person name="Schueler M.G."/>
            <person name="Sehra H.K."/>
            <person name="Shaw-Smith C."/>
            <person name="Shen H."/>
            <person name="Sheridan E.M."/>
            <person name="Shownkeen R."/>
            <person name="Skuce C.D."/>
            <person name="Smith M.L."/>
            <person name="Sotheran E.C."/>
            <person name="Steingruber H.E."/>
            <person name="Steward C.A."/>
            <person name="Storey R."/>
            <person name="Swann R.M."/>
            <person name="Swarbreck D."/>
            <person name="Tabor P.E."/>
            <person name="Taudien S."/>
            <person name="Taylor T."/>
            <person name="Teague B."/>
            <person name="Thomas K."/>
            <person name="Thorpe A."/>
            <person name="Timms K."/>
            <person name="Tracey A."/>
            <person name="Trevanion S."/>
            <person name="Tromans A.C."/>
            <person name="d'Urso M."/>
            <person name="Verduzco D."/>
            <person name="Villasana D."/>
            <person name="Waldron L."/>
            <person name="Wall M."/>
            <person name="Wang Q."/>
            <person name="Warren J."/>
            <person name="Warry G.L."/>
            <person name="Wei X."/>
            <person name="West A."/>
            <person name="Whitehead S.L."/>
            <person name="Whiteley M.N."/>
            <person name="Wilkinson J.E."/>
            <person name="Willey D.L."/>
            <person name="Williams G."/>
            <person name="Williams L."/>
            <person name="Williamson A."/>
            <person name="Williamson H."/>
            <person name="Wilming L."/>
            <person name="Woodmansey R.L."/>
            <person name="Wray P.W."/>
            <person name="Yen J."/>
            <person name="Zhang J."/>
            <person name="Zhou J."/>
            <person name="Zoghbi H."/>
            <person name="Zorilla S."/>
            <person name="Buck D."/>
            <person name="Reinhardt R."/>
            <person name="Poustka A."/>
            <person name="Rosenthal A."/>
            <person name="Lehrach H."/>
            <person name="Meindl A."/>
            <person name="Minx P.J."/>
            <person name="Hillier L.W."/>
            <person name="Willard H.F."/>
            <person name="Wilson R.K."/>
            <person name="Waterston R.H."/>
            <person name="Rice C.M."/>
            <person name="Vaudin M."/>
            <person name="Coulson A."/>
            <person name="Nelson D.L."/>
            <person name="Weinstock G."/>
            <person name="Sulston J.E."/>
            <person name="Durbin R.M."/>
            <person name="Hubbard T."/>
            <person name="Gibbs R.A."/>
            <person name="Beck S."/>
            <person name="Rogers J."/>
            <person name="Bentley D.R."/>
        </authorList>
    </citation>
    <scope>NUCLEOTIDE SEQUENCE [LARGE SCALE GENOMIC DNA]</scope>
    <scope>VARIANT ALA-55</scope>
</reference>
<reference key="4">
    <citation type="submission" date="2005-09" db="EMBL/GenBank/DDBJ databases">
        <authorList>
            <person name="Mural R.J."/>
            <person name="Istrail S."/>
            <person name="Sutton G.G."/>
            <person name="Florea L."/>
            <person name="Halpern A.L."/>
            <person name="Mobarry C.M."/>
            <person name="Lippert R."/>
            <person name="Walenz B."/>
            <person name="Shatkay H."/>
            <person name="Dew I."/>
            <person name="Miller J.R."/>
            <person name="Flanigan M.J."/>
            <person name="Edwards N.J."/>
            <person name="Bolanos R."/>
            <person name="Fasulo D."/>
            <person name="Halldorsson B.V."/>
            <person name="Hannenhalli S."/>
            <person name="Turner R."/>
            <person name="Yooseph S."/>
            <person name="Lu F."/>
            <person name="Nusskern D.R."/>
            <person name="Shue B.C."/>
            <person name="Zheng X.H."/>
            <person name="Zhong F."/>
            <person name="Delcher A.L."/>
            <person name="Huson D.H."/>
            <person name="Kravitz S.A."/>
            <person name="Mouchard L."/>
            <person name="Reinert K."/>
            <person name="Remington K.A."/>
            <person name="Clark A.G."/>
            <person name="Waterman M.S."/>
            <person name="Eichler E.E."/>
            <person name="Adams M.D."/>
            <person name="Hunkapiller M.W."/>
            <person name="Myers E.W."/>
            <person name="Venter J.C."/>
        </authorList>
    </citation>
    <scope>NUCLEOTIDE SEQUENCE [LARGE SCALE GENOMIC DNA]</scope>
</reference>
<reference key="5">
    <citation type="journal article" date="2004" name="Genome Res.">
        <title>The status, quality, and expansion of the NIH full-length cDNA project: the Mammalian Gene Collection (MGC).</title>
        <authorList>
            <consortium name="The MGC Project Team"/>
        </authorList>
    </citation>
    <scope>NUCLEOTIDE SEQUENCE [LARGE SCALE MRNA]</scope>
    <source>
        <tissue>Testis</tissue>
    </source>
</reference>
<reference key="6">
    <citation type="journal article" date="2019" name="J. Proteome Res.">
        <title>Cell Type-Specific Expression of Testis Elevated Genes Based on Transcriptomics and Antibody-Based Proteomics.</title>
        <authorList>
            <person name="Pineau C."/>
            <person name="Hikmet F."/>
            <person name="Zhang C."/>
            <person name="Oksvold P."/>
            <person name="Chen S."/>
            <person name="Fagerberg L."/>
            <person name="Uhlen M."/>
            <person name="Lindskog C."/>
        </authorList>
    </citation>
    <scope>SUBCELLULAR LOCATION</scope>
</reference>
<accession>Q8NHU0</accession>
<accession>B2RU20</accession>
<accession>B7ZMC9</accession>
<accession>D3DTG6</accession>
<accession>P0DMU6</accession>
<accession>Q8N7B7</accession>
<comment type="interaction">
    <interactant intactId="EBI-8643558">
        <id>Q8NHU0</id>
    </interactant>
    <interactant intactId="EBI-739789">
        <id>Q92997</id>
        <label>DVL3</label>
    </interactant>
    <organismsDiffer>false</organismsDiffer>
    <experiments>3</experiments>
</comment>
<comment type="interaction">
    <interactant intactId="EBI-8643558">
        <id>Q8NHU0</id>
    </interactant>
    <interactant intactId="EBI-727004">
        <id>O00560</id>
        <label>SDCBP</label>
    </interactant>
    <organismsDiffer>false</organismsDiffer>
    <experiments>9</experiments>
</comment>
<comment type="interaction">
    <interactant intactId="EBI-8643558">
        <id>Q8NHU0</id>
    </interactant>
    <interactant intactId="EBI-742426">
        <id>Q9H190</id>
        <label>SDCBP2</label>
    </interactant>
    <organismsDiffer>false</organismsDiffer>
    <experiments>8</experiments>
</comment>
<comment type="subcellular location">
    <subcellularLocation>
        <location evidence="5">Nucleus</location>
    </subcellularLocation>
</comment>
<comment type="tissue specificity">
    <text evidence="4">Testis specific. Expressed in cancer cell lines.</text>
</comment>
<comment type="similarity">
    <text>Belongs to the CT45 family.</text>
</comment>
<protein>
    <recommendedName>
        <fullName evidence="8">Cancer/testis antigen family 45 member A3</fullName>
    </recommendedName>
    <alternativeName>
        <fullName evidence="6">Cancer/testis antigen 45-3</fullName>
    </alternativeName>
    <alternativeName>
        <fullName evidence="6">Cancer/testis antigen 45-4</fullName>
    </alternativeName>
    <alternativeName>
        <fullName evidence="7">Cancer/testis antigen 45A3</fullName>
    </alternativeName>
    <alternativeName>
        <fullName evidence="7">Cancer/testis antigen 45A4</fullName>
    </alternativeName>
    <alternativeName>
        <fullName evidence="8">Cancer/testis antigen family 45 member A4</fullName>
    </alternativeName>
</protein>
<sequence>MTDKTEKVAVDPETVFKRPRECDSPSYQKRQRMALLARKQGAGDSLIAGSAMSKEKKLMTGHAIPPSQLDSQIDDFTGFSKDRMMQKPGSNAPVGGNVTSSFSGDDLECRETASSPKSQREINADIKRKLVKELRCVGQKYEKIFEMLEGVQGPTAVRKRFFESIIKEAARCMRRDFVKHLKKKLKRMI</sequence>
<gene>
    <name evidence="8" type="primary">CT45A3</name>
    <name evidence="6" type="synonym">CT45-3</name>
    <name evidence="6" type="synonym">CT45-4</name>
    <name evidence="8" type="synonym">CT45A4</name>
</gene>